<proteinExistence type="evidence at protein level"/>
<organism>
    <name type="scientific">Methanosarcina mazei (strain ATCC BAA-159 / DSM 3647 / Goe1 / Go1 / JCM 11833 / OCM 88)</name>
    <name type="common">Methanosarcina frisia</name>
    <dbReference type="NCBI Taxonomy" id="192952"/>
    <lineage>
        <taxon>Archaea</taxon>
        <taxon>Methanobacteriati</taxon>
        <taxon>Methanobacteriota</taxon>
        <taxon>Stenosarchaea group</taxon>
        <taxon>Methanomicrobia</taxon>
        <taxon>Methanosarcinales</taxon>
        <taxon>Methanosarcinaceae</taxon>
        <taxon>Methanosarcina</taxon>
    </lineage>
</organism>
<gene>
    <name evidence="2" type="primary">hppA1</name>
    <name type="ordered locus">MM_0700</name>
</gene>
<protein>
    <recommendedName>
        <fullName>K(+)-stimulated pyrophosphate-energized sodium pump</fullName>
        <ecNumber evidence="2 3">7.2.3.1</ecNumber>
    </recommendedName>
    <alternativeName>
        <fullName evidence="2">Membrane-bound sodium-translocating pyrophosphatase</fullName>
    </alternativeName>
    <alternativeName>
        <fullName>Mm-PPase</fullName>
    </alternativeName>
    <alternativeName>
        <fullName evidence="2">Pyrophosphate-energized inorganic pyrophosphatase</fullName>
        <shortName evidence="2">Na(+)-PPase</shortName>
    </alternativeName>
</protein>
<reference key="1">
    <citation type="submission" date="2002-05" db="EMBL/GenBank/DDBJ databases">
        <title>Identification and analysis of proton-translocating pyrophosphatases in the methanogenic archaeon Methanosarcina mazei.</title>
        <authorList>
            <person name="Baeumer S."/>
            <person name="Lentes S."/>
            <person name="Gottschalk G."/>
            <person name="Deppenmeier U."/>
        </authorList>
    </citation>
    <scope>NUCLEOTIDE SEQUENCE [GENOMIC DNA]</scope>
    <source>
        <strain>ATCC BAA-159 / DSM 3647 / Goe1 / Go1 / JCM 11833 / OCM 88</strain>
    </source>
</reference>
<reference key="2">
    <citation type="journal article" date="2002" name="J. Mol. Microbiol. Biotechnol.">
        <title>The genome of Methanosarcina mazei: evidence for lateral gene transfer between Bacteria and Archaea.</title>
        <authorList>
            <person name="Deppenmeier U."/>
            <person name="Johann A."/>
            <person name="Hartsch T."/>
            <person name="Merkl R."/>
            <person name="Schmitz R.A."/>
            <person name="Martinez-Arias R."/>
            <person name="Henne A."/>
            <person name="Wiezer A."/>
            <person name="Baeumer S."/>
            <person name="Jacobi C."/>
            <person name="Brueggemann H."/>
            <person name="Lienard T."/>
            <person name="Christmann A."/>
            <person name="Boemecke M."/>
            <person name="Steckel S."/>
            <person name="Bhattacharyya A."/>
            <person name="Lykidis A."/>
            <person name="Overbeek R."/>
            <person name="Klenk H.-P."/>
            <person name="Gunsalus R.P."/>
            <person name="Fritz H.-J."/>
            <person name="Gottschalk G."/>
        </authorList>
    </citation>
    <scope>NUCLEOTIDE SEQUENCE [LARGE SCALE GENOMIC DNA]</scope>
    <source>
        <strain>ATCC BAA-159 / DSM 3647 / Goe1 / Go1 / JCM 11833 / OCM 88</strain>
    </source>
</reference>
<reference key="3">
    <citation type="journal article" date="2007" name="Biochemistry">
        <title>Na+-pyrophosphatase: a novel primary sodium pump.</title>
        <authorList>
            <person name="Malinen A.M."/>
            <person name="Belogurov G.A."/>
            <person name="Baykov A.A."/>
            <person name="Lahti R."/>
        </authorList>
    </citation>
    <scope>FUNCTION</scope>
    <scope>CATALYTIC ACTIVITY</scope>
    <scope>COFACTOR</scope>
    <scope>ACTIVITY REGULATION</scope>
    <scope>BIOPHYSICOCHEMICAL PROPERTIES</scope>
    <scope>SUBCELLULAR LOCATION</scope>
</reference>
<comment type="function">
    <text evidence="2 3">Sodium pump that utilizes the energy of pyrophosphate hydrolysis as the driving force for Na(+) movement across the membrane.</text>
</comment>
<comment type="catalytic activity">
    <reaction evidence="2 3">
        <text>Na(+)(in) + diphosphate + H2O = Na(+)(out) + 2 phosphate + H(+)</text>
        <dbReference type="Rhea" id="RHEA:57884"/>
        <dbReference type="ChEBI" id="CHEBI:15377"/>
        <dbReference type="ChEBI" id="CHEBI:15378"/>
        <dbReference type="ChEBI" id="CHEBI:29101"/>
        <dbReference type="ChEBI" id="CHEBI:33019"/>
        <dbReference type="ChEBI" id="CHEBI:43474"/>
        <dbReference type="EC" id="7.2.3.1"/>
    </reaction>
</comment>
<comment type="cofactor">
    <cofactor evidence="2 3">
        <name>Mg(2+)</name>
        <dbReference type="ChEBI" id="CHEBI:18420"/>
    </cofactor>
</comment>
<comment type="activity regulation">
    <text evidence="2 3">Requires K(+) for maximal activity. Inhibited by the Na(+) ionophore monensin, activated by the K(+) ionophore valinomycin and unaffected by the protonophore CCCP.</text>
</comment>
<comment type="biophysicochemical properties">
    <phDependence>
        <text evidence="3">Optimum pH is 7.5.</text>
    </phDependence>
</comment>
<comment type="subunit">
    <text evidence="2">Homodimer.</text>
</comment>
<comment type="subcellular location">
    <subcellularLocation>
        <location evidence="2 3">Cell membrane</location>
        <topology evidence="2 3">Multi-pass membrane protein</topology>
    </subcellularLocation>
</comment>
<comment type="similarity">
    <text evidence="2">Belongs to the H(+)-translocating pyrophosphatase (TC 3.A.10) family. K(+)-stimulated subfamily.</text>
</comment>
<keyword id="KW-0106">Calcium</keyword>
<keyword id="KW-1003">Cell membrane</keyword>
<keyword id="KW-0406">Ion transport</keyword>
<keyword id="KW-0460">Magnesium</keyword>
<keyword id="KW-0472">Membrane</keyword>
<keyword id="KW-0479">Metal-binding</keyword>
<keyword id="KW-0630">Potassium</keyword>
<keyword id="KW-0915">Sodium</keyword>
<keyword id="KW-0739">Sodium transport</keyword>
<keyword id="KW-1278">Translocase</keyword>
<keyword id="KW-0812">Transmembrane</keyword>
<keyword id="KW-1133">Transmembrane helix</keyword>
<keyword id="KW-0813">Transport</keyword>
<dbReference type="EC" id="7.2.3.1" evidence="2 3"/>
<dbReference type="EMBL" id="AF312701">
    <property type="protein sequence ID" value="AAM22543.1"/>
    <property type="molecule type" value="Genomic_DNA"/>
</dbReference>
<dbReference type="EMBL" id="AE008384">
    <property type="protein sequence ID" value="AAM30396.1"/>
    <property type="molecule type" value="Genomic_DNA"/>
</dbReference>
<dbReference type="RefSeq" id="WP_011032651.1">
    <property type="nucleotide sequence ID" value="NC_003901.1"/>
</dbReference>
<dbReference type="SMR" id="Q8PYZ8"/>
<dbReference type="TCDB" id="3.A.10.1.14">
    <property type="family name" value="the h(+), na(+)-translocating pyrophosphatase (m(+)-ppase) family"/>
</dbReference>
<dbReference type="KEGG" id="mma:MM_0700"/>
<dbReference type="PATRIC" id="fig|192952.21.peg.833"/>
<dbReference type="eggNOG" id="arCOG04949">
    <property type="taxonomic scope" value="Archaea"/>
</dbReference>
<dbReference type="HOGENOM" id="CLU_008743_3_1_2"/>
<dbReference type="BRENDA" id="7.1.3.2">
    <property type="organism ID" value="3270"/>
</dbReference>
<dbReference type="Proteomes" id="UP000000595">
    <property type="component" value="Chromosome"/>
</dbReference>
<dbReference type="GO" id="GO:0005886">
    <property type="term" value="C:plasma membrane"/>
    <property type="evidence" value="ECO:0007669"/>
    <property type="project" value="UniProtKB-SubCell"/>
</dbReference>
<dbReference type="GO" id="GO:0009678">
    <property type="term" value="F:diphosphate hydrolysis-driven proton transmembrane transporter activity"/>
    <property type="evidence" value="ECO:0007669"/>
    <property type="project" value="UniProtKB-UniRule"/>
</dbReference>
<dbReference type="GO" id="GO:0004427">
    <property type="term" value="F:inorganic diphosphate phosphatase activity"/>
    <property type="evidence" value="ECO:0007669"/>
    <property type="project" value="UniProtKB-UniRule"/>
</dbReference>
<dbReference type="GO" id="GO:0000287">
    <property type="term" value="F:magnesium ion binding"/>
    <property type="evidence" value="ECO:0007669"/>
    <property type="project" value="UniProtKB-UniRule"/>
</dbReference>
<dbReference type="GO" id="GO:0030955">
    <property type="term" value="F:potassium ion binding"/>
    <property type="evidence" value="ECO:0007669"/>
    <property type="project" value="UniProtKB-UniRule"/>
</dbReference>
<dbReference type="GO" id="GO:0006814">
    <property type="term" value="P:sodium ion transport"/>
    <property type="evidence" value="ECO:0007669"/>
    <property type="project" value="UniProtKB-UniRule"/>
</dbReference>
<dbReference type="HAMAP" id="MF_01129">
    <property type="entry name" value="PPase_energized_pump"/>
    <property type="match status" value="1"/>
</dbReference>
<dbReference type="InterPro" id="IPR004131">
    <property type="entry name" value="PPase-energised_H-pump"/>
</dbReference>
<dbReference type="NCBIfam" id="NF001960">
    <property type="entry name" value="PRK00733.3-5"/>
    <property type="match status" value="1"/>
</dbReference>
<dbReference type="NCBIfam" id="TIGR01104">
    <property type="entry name" value="V_PPase"/>
    <property type="match status" value="1"/>
</dbReference>
<dbReference type="PANTHER" id="PTHR31998">
    <property type="entry name" value="K(+)-INSENSITIVE PYROPHOSPHATE-ENERGIZED PROTON PUMP"/>
    <property type="match status" value="1"/>
</dbReference>
<dbReference type="Pfam" id="PF03030">
    <property type="entry name" value="H_PPase"/>
    <property type="match status" value="1"/>
</dbReference>
<dbReference type="PIRSF" id="PIRSF001265">
    <property type="entry name" value="H+-PPase"/>
    <property type="match status" value="1"/>
</dbReference>
<feature type="chain" id="PRO_0000217007" description="K(+)-stimulated pyrophosphate-energized sodium pump">
    <location>
        <begin position="1"/>
        <end position="676"/>
    </location>
</feature>
<feature type="transmembrane region" description="Helical" evidence="2">
    <location>
        <begin position="3"/>
        <end position="23"/>
    </location>
</feature>
<feature type="transmembrane region" description="Helical" evidence="2">
    <location>
        <begin position="58"/>
        <end position="78"/>
    </location>
</feature>
<feature type="transmembrane region" description="Helical" evidence="2">
    <location>
        <begin position="83"/>
        <end position="103"/>
    </location>
</feature>
<feature type="transmembrane region" description="Helical" evidence="2">
    <location>
        <begin position="129"/>
        <end position="149"/>
    </location>
</feature>
<feature type="transmembrane region" description="Helical" evidence="2">
    <location>
        <begin position="158"/>
        <end position="178"/>
    </location>
</feature>
<feature type="transmembrane region" description="Helical" evidence="2">
    <location>
        <begin position="241"/>
        <end position="261"/>
    </location>
</feature>
<feature type="transmembrane region" description="Helical" evidence="2">
    <location>
        <begin position="265"/>
        <end position="285"/>
    </location>
</feature>
<feature type="transmembrane region" description="Helical" evidence="2">
    <location>
        <begin position="298"/>
        <end position="318"/>
    </location>
</feature>
<feature type="transmembrane region" description="Helical" evidence="2">
    <location>
        <begin position="324"/>
        <end position="344"/>
    </location>
</feature>
<feature type="transmembrane region" description="Helical" evidence="2">
    <location>
        <begin position="390"/>
        <end position="410"/>
    </location>
</feature>
<feature type="transmembrane region" description="Helical" evidence="2">
    <location>
        <begin position="411"/>
        <end position="431"/>
    </location>
</feature>
<feature type="transmembrane region" description="Helical" evidence="2">
    <location>
        <begin position="469"/>
        <end position="489"/>
    </location>
</feature>
<feature type="transmembrane region" description="Helical" evidence="2">
    <location>
        <begin position="501"/>
        <end position="521"/>
    </location>
</feature>
<feature type="transmembrane region" description="Helical" evidence="2">
    <location>
        <begin position="572"/>
        <end position="592"/>
    </location>
</feature>
<feature type="transmembrane region" description="Helical" evidence="2">
    <location>
        <begin position="593"/>
        <end position="613"/>
    </location>
</feature>
<feature type="transmembrane region" description="Helical" evidence="2">
    <location>
        <begin position="656"/>
        <end position="676"/>
    </location>
</feature>
<feature type="binding site" evidence="1">
    <location>
        <position position="188"/>
    </location>
    <ligand>
        <name>substrate</name>
    </ligand>
</feature>
<feature type="binding site" evidence="1">
    <location>
        <position position="191"/>
    </location>
    <ligand>
        <name>Mg(2+)</name>
        <dbReference type="ChEBI" id="CHEBI:18420"/>
        <label>1</label>
    </ligand>
</feature>
<feature type="binding site" evidence="1">
    <location>
        <position position="195"/>
    </location>
    <ligand>
        <name>Mg(2+)</name>
        <dbReference type="ChEBI" id="CHEBI:18420"/>
        <label>1</label>
    </ligand>
</feature>
<feature type="binding site" evidence="1">
    <location>
        <position position="218"/>
    </location>
    <ligand>
        <name>Mg(2+)</name>
        <dbReference type="ChEBI" id="CHEBI:18420"/>
        <label>2</label>
    </ligand>
</feature>
<feature type="binding site" evidence="1">
    <location>
        <position position="221"/>
    </location>
    <ligand>
        <name>Mg(2+)</name>
        <dbReference type="ChEBI" id="CHEBI:18420"/>
        <label>2</label>
    </ligand>
</feature>
<feature type="binding site" evidence="1">
    <location>
        <position position="433"/>
    </location>
    <ligand>
        <name>Mg(2+)</name>
        <dbReference type="ChEBI" id="CHEBI:18420"/>
        <label>2</label>
    </ligand>
</feature>
<feature type="binding site" evidence="1">
    <location>
        <position position="617"/>
    </location>
    <ligand>
        <name>Ca(2+)</name>
        <dbReference type="ChEBI" id="CHEBI:29108"/>
    </ligand>
</feature>
<feature type="binding site" evidence="1">
    <location>
        <position position="643"/>
    </location>
    <ligand>
        <name>Ca(2+)</name>
        <dbReference type="ChEBI" id="CHEBI:29108"/>
    </ligand>
</feature>
<feature type="binding site" evidence="1">
    <location>
        <position position="647"/>
    </location>
    <ligand>
        <name>Ca(2+)</name>
        <dbReference type="ChEBI" id="CHEBI:29108"/>
    </ligand>
</feature>
<feature type="binding site" evidence="1">
    <location>
        <position position="650"/>
    </location>
    <ligand>
        <name>substrate</name>
    </ligand>
</feature>
<feature type="site" description="Important for ion transport" evidence="1">
    <location>
        <position position="180"/>
    </location>
</feature>
<feature type="site" description="Important for ion transport" evidence="1">
    <location>
        <position position="225"/>
    </location>
</feature>
<feature type="site" description="Important for ion transport" evidence="1">
    <location>
        <position position="232"/>
    </location>
</feature>
<feature type="site" description="Important for potassium dependence" evidence="1">
    <location>
        <position position="463"/>
    </location>
</feature>
<feature type="site" description="Important for ion transport" evidence="1">
    <location>
        <position position="651"/>
    </location>
</feature>
<feature type="site" description="Important for ion transport" evidence="1">
    <location>
        <position position="662"/>
    </location>
</feature>
<evidence type="ECO:0000250" key="1"/>
<evidence type="ECO:0000255" key="2">
    <source>
        <dbReference type="HAMAP-Rule" id="MF_01129"/>
    </source>
</evidence>
<evidence type="ECO:0000269" key="3">
    <source>
    </source>
</evidence>
<sequence>MDMLIYLTPICALIGLIFAGISYKNVRNEGEGNELIKKITAAIHGGAMVYLNRQYRAIAVFVVFIAIVLALVLPNGVLTAACFVFGAVLSATAGYAGMLTATIANGRTTNAATRGIGPAFKVSFASGTVMGMSVVGLGLFGLSLSFIILGNIYTDMDLFTLLNIIAGFSFGASSIALFARVGGGIFTKAADVGADLVGKVEAGIPEDDPRNPAVIADNVGDNVGDIAGMGADLYESYVGSIIATMLLAASTAAATFPGIPVMNVVMVPLVIAAVGILASVIGTFFVRTNKTESSAIHMAFNMGLIAAIVLTVIASYVVTGHLLGGYGLNVFFSTVAGLVAGFLIGQITEHYTSYDKKPTLTVAHSCQTGSATNVITGFAKGMESTLWPAVIISIAIYIAFQLAGLYGIAIAAVGMLATLGISLSVDAYGPVADNAGGIAEMSHQKKEVRQITDTLDAVGNTTAAMGKGFAIGSAALTALSLFASYAIAVGLTSIDVMNPNVFIGLIIGAMLPFLFSSMTILAVGNAAGEVVVEVRRQFKEIKGLMEGKADPDYSKCITISTHSALKEMIPPGILAVIAPILVGLVLGAGALGGLLAGSVVSGFMLAITMSNAGGSWDNAKKFIELGNFGGKGSDAHKAGVTGDTVGDPFKDTAGPAINILIKLMSIVALVFAPLFI</sequence>
<name>HPPA1_METMA</name>
<accession>Q8PYZ8</accession>